<name>YL872_MIMIV</name>
<keyword id="KW-1185">Reference proteome</keyword>
<keyword id="KW-0946">Virion</keyword>
<proteinExistence type="evidence at protein level"/>
<evidence type="ECO:0000269" key="1">
    <source>
    </source>
</evidence>
<organismHost>
    <name type="scientific">Acanthamoeba polyphaga</name>
    <name type="common">Amoeba</name>
    <dbReference type="NCBI Taxonomy" id="5757"/>
</organismHost>
<comment type="subcellular location">
    <subcellularLocation>
        <location evidence="1">Virion</location>
    </subcellularLocation>
</comment>
<dbReference type="EMBL" id="AY653733">
    <property type="protein sequence ID" value="AAV51130.1"/>
    <property type="molecule type" value="Genomic_DNA"/>
</dbReference>
<dbReference type="KEGG" id="vg:9925539"/>
<dbReference type="OrthoDB" id="32378at10239"/>
<dbReference type="Proteomes" id="UP000001134">
    <property type="component" value="Genome"/>
</dbReference>
<dbReference type="GO" id="GO:0044423">
    <property type="term" value="C:virion component"/>
    <property type="evidence" value="ECO:0007669"/>
    <property type="project" value="UniProtKB-KW"/>
</dbReference>
<organism>
    <name type="scientific">Acanthamoeba polyphaga mimivirus</name>
    <name type="common">APMV</name>
    <dbReference type="NCBI Taxonomy" id="212035"/>
    <lineage>
        <taxon>Viruses</taxon>
        <taxon>Varidnaviria</taxon>
        <taxon>Bamfordvirae</taxon>
        <taxon>Nucleocytoviricota</taxon>
        <taxon>Megaviricetes</taxon>
        <taxon>Imitervirales</taxon>
        <taxon>Mimiviridae</taxon>
        <taxon>Megamimivirinae</taxon>
        <taxon>Mimivirus</taxon>
        <taxon>Mimivirus bradfordmassiliense</taxon>
    </lineage>
</organism>
<accession>Q5UP40</accession>
<protein>
    <recommendedName>
        <fullName>Uncharacterized protein L872</fullName>
    </recommendedName>
</protein>
<feature type="chain" id="PRO_0000247379" description="Uncharacterized protein L872">
    <location>
        <begin position="1"/>
        <end position="340"/>
    </location>
</feature>
<gene>
    <name type="ordered locus">MIMI_L872</name>
</gene>
<sequence>MEYKLNKYIHKINTDPKSIYLNKIAKYYDSSIPIQVGGLRLNDFDSLVKFLKQAYDKAPTETSNKYLVILYGPPASGKSISRYIASYWIQELFKETESIENIYKSFIDTGIDEITYDIETPTGKRIIDLLKENIDNKLGNDKSIENAKKNISLLASSSWDIYRTNRPDYVSELLYYFAIFLNKNIFLETTGSSIPYLERIINLLSFYGYIPIVVYPFINDVSILYNRSIQRGLKEGRFLRCDTSFGLASQMQISLANYPKIKNIVSQYKNYLIYQYNSNFSNEITKNIYSFNFSSLGDYMLEFKCKIETIDDKITQNNIIDITSNNYDKALNLNLNCGEN</sequence>
<reference key="1">
    <citation type="journal article" date="2004" name="Science">
        <title>The 1.2-megabase genome sequence of Mimivirus.</title>
        <authorList>
            <person name="Raoult D."/>
            <person name="Audic S."/>
            <person name="Robert C."/>
            <person name="Abergel C."/>
            <person name="Renesto P."/>
            <person name="Ogata H."/>
            <person name="La Scola B."/>
            <person name="Susan M."/>
            <person name="Claverie J.-M."/>
        </authorList>
    </citation>
    <scope>NUCLEOTIDE SEQUENCE [LARGE SCALE GENOMIC DNA]</scope>
    <source>
        <strain>Rowbotham-Bradford</strain>
    </source>
</reference>
<reference key="2">
    <citation type="journal article" date="2006" name="J. Virol.">
        <title>Mimivirus giant particles incorporate a large fraction of anonymous and unique gene products.</title>
        <authorList>
            <person name="Renesto P."/>
            <person name="Abergel C."/>
            <person name="Decloquement P."/>
            <person name="Moinier D."/>
            <person name="Azza S."/>
            <person name="Ogata H."/>
            <person name="Fourquet P."/>
            <person name="Gorvel J.-P."/>
            <person name="Claverie J.-M."/>
            <person name="Raoult D."/>
        </authorList>
    </citation>
    <scope>IDENTIFICATION BY MASS SPECTROMETRY [LARGE SCALE ANALYSIS]</scope>
    <scope>SUBCELLULAR LOCATION</scope>
</reference>